<name>NAGB_CUTAK</name>
<dbReference type="EC" id="3.5.99.6" evidence="1"/>
<dbReference type="EMBL" id="AE017283">
    <property type="protein sequence ID" value="AAT82228.1"/>
    <property type="molecule type" value="Genomic_DNA"/>
</dbReference>
<dbReference type="RefSeq" id="WP_002513215.1">
    <property type="nucleotide sequence ID" value="NZ_CP025935.1"/>
</dbReference>
<dbReference type="SMR" id="Q6AAI8"/>
<dbReference type="EnsemblBacteria" id="AAT82228">
    <property type="protein sequence ID" value="AAT82228"/>
    <property type="gene ID" value="PPA0476"/>
</dbReference>
<dbReference type="GeneID" id="92856453"/>
<dbReference type="KEGG" id="pac:PPA0476"/>
<dbReference type="eggNOG" id="COG0363">
    <property type="taxonomic scope" value="Bacteria"/>
</dbReference>
<dbReference type="HOGENOM" id="CLU_049611_1_1_11"/>
<dbReference type="UniPathway" id="UPA00629">
    <property type="reaction ID" value="UER00684"/>
</dbReference>
<dbReference type="Proteomes" id="UP000000603">
    <property type="component" value="Chromosome"/>
</dbReference>
<dbReference type="GO" id="GO:0005737">
    <property type="term" value="C:cytoplasm"/>
    <property type="evidence" value="ECO:0007669"/>
    <property type="project" value="TreeGrafter"/>
</dbReference>
<dbReference type="GO" id="GO:0004342">
    <property type="term" value="F:glucosamine-6-phosphate deaminase activity"/>
    <property type="evidence" value="ECO:0007669"/>
    <property type="project" value="UniProtKB-UniRule"/>
</dbReference>
<dbReference type="GO" id="GO:0042802">
    <property type="term" value="F:identical protein binding"/>
    <property type="evidence" value="ECO:0007669"/>
    <property type="project" value="TreeGrafter"/>
</dbReference>
<dbReference type="GO" id="GO:0005975">
    <property type="term" value="P:carbohydrate metabolic process"/>
    <property type="evidence" value="ECO:0007669"/>
    <property type="project" value="InterPro"/>
</dbReference>
<dbReference type="GO" id="GO:0006043">
    <property type="term" value="P:glucosamine catabolic process"/>
    <property type="evidence" value="ECO:0007669"/>
    <property type="project" value="TreeGrafter"/>
</dbReference>
<dbReference type="GO" id="GO:0006046">
    <property type="term" value="P:N-acetylglucosamine catabolic process"/>
    <property type="evidence" value="ECO:0007669"/>
    <property type="project" value="TreeGrafter"/>
</dbReference>
<dbReference type="GO" id="GO:0019262">
    <property type="term" value="P:N-acetylneuraminate catabolic process"/>
    <property type="evidence" value="ECO:0007669"/>
    <property type="project" value="UniProtKB-UniRule"/>
</dbReference>
<dbReference type="CDD" id="cd01399">
    <property type="entry name" value="GlcN6P_deaminase"/>
    <property type="match status" value="1"/>
</dbReference>
<dbReference type="FunFam" id="3.40.50.1360:FF:000003">
    <property type="entry name" value="Glucosamine-6-phosphate deaminase"/>
    <property type="match status" value="1"/>
</dbReference>
<dbReference type="Gene3D" id="3.40.50.1360">
    <property type="match status" value="1"/>
</dbReference>
<dbReference type="HAMAP" id="MF_01241">
    <property type="entry name" value="GlcN6P_deamin"/>
    <property type="match status" value="1"/>
</dbReference>
<dbReference type="InterPro" id="IPR006148">
    <property type="entry name" value="Glc/Gal-6P_isomerase"/>
</dbReference>
<dbReference type="InterPro" id="IPR004547">
    <property type="entry name" value="Glucosamine6P_isomerase"/>
</dbReference>
<dbReference type="InterPro" id="IPR037171">
    <property type="entry name" value="NagB/RpiA_transferase-like"/>
</dbReference>
<dbReference type="NCBIfam" id="TIGR00502">
    <property type="entry name" value="nagB"/>
    <property type="match status" value="1"/>
</dbReference>
<dbReference type="NCBIfam" id="NF001684">
    <property type="entry name" value="PRK00443.1-4"/>
    <property type="match status" value="1"/>
</dbReference>
<dbReference type="PANTHER" id="PTHR11280">
    <property type="entry name" value="GLUCOSAMINE-6-PHOSPHATE ISOMERASE"/>
    <property type="match status" value="1"/>
</dbReference>
<dbReference type="PANTHER" id="PTHR11280:SF5">
    <property type="entry name" value="GLUCOSAMINE-6-PHOSPHATE ISOMERASE"/>
    <property type="match status" value="1"/>
</dbReference>
<dbReference type="Pfam" id="PF01182">
    <property type="entry name" value="Glucosamine_iso"/>
    <property type="match status" value="1"/>
</dbReference>
<dbReference type="SUPFAM" id="SSF100950">
    <property type="entry name" value="NagB/RpiA/CoA transferase-like"/>
    <property type="match status" value="1"/>
</dbReference>
<protein>
    <recommendedName>
        <fullName evidence="1">Glucosamine-6-phosphate deaminase</fullName>
        <ecNumber evidence="1">3.5.99.6</ecNumber>
    </recommendedName>
    <alternativeName>
        <fullName evidence="1">GlcN6P deaminase</fullName>
        <shortName evidence="1">GNPDA</shortName>
    </alternativeName>
    <alternativeName>
        <fullName evidence="1">Glucosamine-6-phosphate isomerase</fullName>
    </alternativeName>
</protein>
<sequence length="261" mass="27331">MEVIICSDEQAVGRIAADRIAKVLGRAKAPVLGVATGSTPLTTYSSLAALAAEGKADFTDLRAFALDEYIGLPADDERSYAATIRHTVTEQLGLDPANVHTPDGMADDLDAACAAYETAIQEADGVDVQILGIGANGHIGFNEPTSSLSSRTRVKTLAERTKADNARFFEEGEKVPSHCVTQGLGTIMDARNVVLLAIGANKADALAGAVEGPVSAMCPASVLQFHPHVLVIADDAAASKLTMAEYFRWTDSQRGDLSGAM</sequence>
<keyword id="KW-0119">Carbohydrate metabolism</keyword>
<keyword id="KW-0378">Hydrolase</keyword>
<feature type="chain" id="PRO_1000067010" description="Glucosamine-6-phosphate deaminase">
    <location>
        <begin position="1"/>
        <end position="261"/>
    </location>
</feature>
<feature type="active site" description="Proton acceptor; for enolization step" evidence="1">
    <location>
        <position position="67"/>
    </location>
</feature>
<feature type="active site" description="For ring-opening step" evidence="1">
    <location>
        <position position="136"/>
    </location>
</feature>
<feature type="active site" description="Proton acceptor; for ring-opening step" evidence="1">
    <location>
        <position position="138"/>
    </location>
</feature>
<feature type="active site" description="For ring-opening step" evidence="1">
    <location>
        <position position="143"/>
    </location>
</feature>
<organism>
    <name type="scientific">Cutibacterium acnes (strain DSM 16379 / KPA171202)</name>
    <name type="common">Propionibacterium acnes</name>
    <dbReference type="NCBI Taxonomy" id="267747"/>
    <lineage>
        <taxon>Bacteria</taxon>
        <taxon>Bacillati</taxon>
        <taxon>Actinomycetota</taxon>
        <taxon>Actinomycetes</taxon>
        <taxon>Propionibacteriales</taxon>
        <taxon>Propionibacteriaceae</taxon>
        <taxon>Cutibacterium</taxon>
    </lineage>
</organism>
<evidence type="ECO:0000255" key="1">
    <source>
        <dbReference type="HAMAP-Rule" id="MF_01241"/>
    </source>
</evidence>
<reference key="1">
    <citation type="journal article" date="2004" name="Science">
        <title>The complete genome sequence of Propionibacterium acnes, a commensal of human skin.</title>
        <authorList>
            <person name="Brueggemann H."/>
            <person name="Henne A."/>
            <person name="Hoster F."/>
            <person name="Liesegang H."/>
            <person name="Wiezer A."/>
            <person name="Strittmatter A."/>
            <person name="Hujer S."/>
            <person name="Duerre P."/>
            <person name="Gottschalk G."/>
        </authorList>
    </citation>
    <scope>NUCLEOTIDE SEQUENCE [LARGE SCALE GENOMIC DNA]</scope>
    <source>
        <strain>DSM 16379 / KPA171202</strain>
    </source>
</reference>
<accession>Q6AAI8</accession>
<proteinExistence type="inferred from homology"/>
<gene>
    <name evidence="1" type="primary">nagB</name>
    <name type="ordered locus">PPA0476</name>
</gene>
<comment type="function">
    <text evidence="1">Catalyzes the reversible isomerization-deamination of glucosamine 6-phosphate (GlcN6P) to form fructose 6-phosphate (Fru6P) and ammonium ion.</text>
</comment>
<comment type="catalytic activity">
    <reaction evidence="1">
        <text>alpha-D-glucosamine 6-phosphate + H2O = beta-D-fructose 6-phosphate + NH4(+)</text>
        <dbReference type="Rhea" id="RHEA:12172"/>
        <dbReference type="ChEBI" id="CHEBI:15377"/>
        <dbReference type="ChEBI" id="CHEBI:28938"/>
        <dbReference type="ChEBI" id="CHEBI:57634"/>
        <dbReference type="ChEBI" id="CHEBI:75989"/>
        <dbReference type="EC" id="3.5.99.6"/>
    </reaction>
</comment>
<comment type="pathway">
    <text evidence="1">Amino-sugar metabolism; N-acetylneuraminate degradation; D-fructose 6-phosphate from N-acetylneuraminate: step 5/5.</text>
</comment>
<comment type="similarity">
    <text evidence="1">Belongs to the glucosamine/galactosamine-6-phosphate isomerase family. NagB subfamily.</text>
</comment>